<reference key="1">
    <citation type="journal article" date="1996" name="Microbiology">
        <title>Cloning and sequencing of a 40.6 kb segment in the 73 degrees-76 degrees region of the Bacillus subtilis chromosome containing genes for trehalose metabolism and acetoin utilization.</title>
        <authorList>
            <person name="Yamamoto H."/>
            <person name="Uchiyama S."/>
            <person name="Sekiguchi J."/>
        </authorList>
    </citation>
    <scope>NUCLEOTIDE SEQUENCE [GENOMIC DNA]</scope>
    <source>
        <strain>168 / AC327</strain>
    </source>
</reference>
<reference key="2">
    <citation type="journal article" date="1997" name="Nature">
        <title>The complete genome sequence of the Gram-positive bacterium Bacillus subtilis.</title>
        <authorList>
            <person name="Kunst F."/>
            <person name="Ogasawara N."/>
            <person name="Moszer I."/>
            <person name="Albertini A.M."/>
            <person name="Alloni G."/>
            <person name="Azevedo V."/>
            <person name="Bertero M.G."/>
            <person name="Bessieres P."/>
            <person name="Bolotin A."/>
            <person name="Borchert S."/>
            <person name="Borriss R."/>
            <person name="Boursier L."/>
            <person name="Brans A."/>
            <person name="Braun M."/>
            <person name="Brignell S.C."/>
            <person name="Bron S."/>
            <person name="Brouillet S."/>
            <person name="Bruschi C.V."/>
            <person name="Caldwell B."/>
            <person name="Capuano V."/>
            <person name="Carter N.M."/>
            <person name="Choi S.-K."/>
            <person name="Codani J.-J."/>
            <person name="Connerton I.F."/>
            <person name="Cummings N.J."/>
            <person name="Daniel R.A."/>
            <person name="Denizot F."/>
            <person name="Devine K.M."/>
            <person name="Duesterhoeft A."/>
            <person name="Ehrlich S.D."/>
            <person name="Emmerson P.T."/>
            <person name="Entian K.-D."/>
            <person name="Errington J."/>
            <person name="Fabret C."/>
            <person name="Ferrari E."/>
            <person name="Foulger D."/>
            <person name="Fritz C."/>
            <person name="Fujita M."/>
            <person name="Fujita Y."/>
            <person name="Fuma S."/>
            <person name="Galizzi A."/>
            <person name="Galleron N."/>
            <person name="Ghim S.-Y."/>
            <person name="Glaser P."/>
            <person name="Goffeau A."/>
            <person name="Golightly E.J."/>
            <person name="Grandi G."/>
            <person name="Guiseppi G."/>
            <person name="Guy B.J."/>
            <person name="Haga K."/>
            <person name="Haiech J."/>
            <person name="Harwood C.R."/>
            <person name="Henaut A."/>
            <person name="Hilbert H."/>
            <person name="Holsappel S."/>
            <person name="Hosono S."/>
            <person name="Hullo M.-F."/>
            <person name="Itaya M."/>
            <person name="Jones L.-M."/>
            <person name="Joris B."/>
            <person name="Karamata D."/>
            <person name="Kasahara Y."/>
            <person name="Klaerr-Blanchard M."/>
            <person name="Klein C."/>
            <person name="Kobayashi Y."/>
            <person name="Koetter P."/>
            <person name="Koningstein G."/>
            <person name="Krogh S."/>
            <person name="Kumano M."/>
            <person name="Kurita K."/>
            <person name="Lapidus A."/>
            <person name="Lardinois S."/>
            <person name="Lauber J."/>
            <person name="Lazarevic V."/>
            <person name="Lee S.-M."/>
            <person name="Levine A."/>
            <person name="Liu H."/>
            <person name="Masuda S."/>
            <person name="Mauel C."/>
            <person name="Medigue C."/>
            <person name="Medina N."/>
            <person name="Mellado R.P."/>
            <person name="Mizuno M."/>
            <person name="Moestl D."/>
            <person name="Nakai S."/>
            <person name="Noback M."/>
            <person name="Noone D."/>
            <person name="O'Reilly M."/>
            <person name="Ogawa K."/>
            <person name="Ogiwara A."/>
            <person name="Oudega B."/>
            <person name="Park S.-H."/>
            <person name="Parro V."/>
            <person name="Pohl T.M."/>
            <person name="Portetelle D."/>
            <person name="Porwollik S."/>
            <person name="Prescott A.M."/>
            <person name="Presecan E."/>
            <person name="Pujic P."/>
            <person name="Purnelle B."/>
            <person name="Rapoport G."/>
            <person name="Rey M."/>
            <person name="Reynolds S."/>
            <person name="Rieger M."/>
            <person name="Rivolta C."/>
            <person name="Rocha E."/>
            <person name="Roche B."/>
            <person name="Rose M."/>
            <person name="Sadaie Y."/>
            <person name="Sato T."/>
            <person name="Scanlan E."/>
            <person name="Schleich S."/>
            <person name="Schroeter R."/>
            <person name="Scoffone F."/>
            <person name="Sekiguchi J."/>
            <person name="Sekowska A."/>
            <person name="Seror S.J."/>
            <person name="Serror P."/>
            <person name="Shin B.-S."/>
            <person name="Soldo B."/>
            <person name="Sorokin A."/>
            <person name="Tacconi E."/>
            <person name="Takagi T."/>
            <person name="Takahashi H."/>
            <person name="Takemaru K."/>
            <person name="Takeuchi M."/>
            <person name="Tamakoshi A."/>
            <person name="Tanaka T."/>
            <person name="Terpstra P."/>
            <person name="Tognoni A."/>
            <person name="Tosato V."/>
            <person name="Uchiyama S."/>
            <person name="Vandenbol M."/>
            <person name="Vannier F."/>
            <person name="Vassarotti A."/>
            <person name="Viari A."/>
            <person name="Wambutt R."/>
            <person name="Wedler E."/>
            <person name="Wedler H."/>
            <person name="Weitzenegger T."/>
            <person name="Winters P."/>
            <person name="Wipat A."/>
            <person name="Yamamoto H."/>
            <person name="Yamane K."/>
            <person name="Yasumoto K."/>
            <person name="Yata K."/>
            <person name="Yoshida K."/>
            <person name="Yoshikawa H.-F."/>
            <person name="Zumstein E."/>
            <person name="Yoshikawa H."/>
            <person name="Danchin A."/>
        </authorList>
    </citation>
    <scope>NUCLEOTIDE SEQUENCE [LARGE SCALE GENOMIC DNA]</scope>
    <source>
        <strain>168</strain>
    </source>
</reference>
<reference key="3">
    <citation type="journal article" date="2009" name="Arch. Microbiol.">
        <title>Characterization of Bacillus subtilis YfkE (ChaA): a calcium-specific Ca2+/H+ antiporter of the CaCA family.</title>
        <authorList>
            <person name="Fujisawa M."/>
            <person name="Wada Y."/>
            <person name="Tsuchiya T."/>
            <person name="Ito M."/>
        </authorList>
    </citation>
    <scope>FUNCTION</scope>
    <scope>BIOPHYSICOCHEMICAL PROPERTIES</scope>
    <scope>INDUCTION</scope>
    <scope>GENE NAME</scope>
    <source>
        <strain>168</strain>
    </source>
</reference>
<reference key="4">
    <citation type="journal article" date="2013" name="Proc. Natl. Acad. Sci. U.S.A.">
        <title>Crystal structure of Ca2+/H+ antiporter protein YfkE reveals the mechanisms of Ca2+ efflux and its pH regulation.</title>
        <authorList>
            <person name="Wu M."/>
            <person name="Tong S."/>
            <person name="Waltersperger S."/>
            <person name="Diederichs K."/>
            <person name="Wang M."/>
            <person name="Zheng L."/>
        </authorList>
    </citation>
    <scope>X-RAY CRYSTALLOGRAPHY (3.00 ANGSTROMS)</scope>
    <scope>ACTIVITY REGULATION</scope>
    <scope>SUBUNIT</scope>
    <scope>SUBCELLULAR LOCATION</scope>
    <scope>MUTAGENESIS OF ASN-64; GLY-68; ASN-69; GLU-72; ASN-99; LYS-116; ASN-252; GLU-255; HIS-256; SER-258; SER-278 AND GLN-281</scope>
</reference>
<sequence length="351" mass="37522">MNRIFFILVAAGVPLSVIGSLMHWPSAVLFAVYCVTIIALASYMGRATESLSIIAGPRIGGLLNATFGNAVELIISLFALKEGLTGIVLASLTGSVLGNLLLVAGLSFFVGGLKYKRQEFNIHDARHNSGLLIFAIIVAFVIPEVFSVGMGNASKLNLSIGISIIMILLYVAALYFKLVTHRGVYQPNNAAQTEEEEEPEWSGKVATIVLFAATIVVAYISENLVHTFHSVAEQFGWSELFIGVIIVAIVGNAAEHASAIIMAFKNKMDIAVEIAVGSTLQIAMFVAPVLVICSIFFPTSMPLVFTLPELVAMVSAVLLMIAISNDGDSNWFEGATLLAAYVIMAIGFFLL</sequence>
<comment type="function">
    <text evidence="2">Ca(+)/H(+) antiporter that extrudes calcium in exchange for external protons. Does not transport sodium or potassium.</text>
</comment>
<comment type="activity regulation">
    <text evidence="3">Calcium efflux is tightly regulated by intracellular pH.</text>
</comment>
<comment type="biophysicochemical properties">
    <kinetics>
        <KM evidence="2">12.5 uM for Ca(2+) (at pH 8.5)</KM>
        <KM evidence="2">37.5 uM for Ca(2+) (at pH 8.0)</KM>
        <KM evidence="2">113 uM for Ca(2+) (at pH 7.5)</KM>
    </kinetics>
</comment>
<comment type="subunit">
    <text evidence="3">Homotrimer.</text>
</comment>
<comment type="subcellular location">
    <subcellularLocation>
        <location evidence="3">Cell membrane</location>
        <topology evidence="3">Multi-pass membrane protein</topology>
    </subcellularLocation>
</comment>
<comment type="induction">
    <text evidence="2">Transcriptionally regulated by the forespore-specific sigma factor, SigG, and the general stress response regulator, SigB.</text>
</comment>
<comment type="similarity">
    <text evidence="4">Belongs to the Ca(2+):cation antiporter (CaCA) (TC 2.A.19) family. Cation/proton exchanger (CAX) subfamily.</text>
</comment>
<keyword id="KW-0002">3D-structure</keyword>
<keyword id="KW-0050">Antiport</keyword>
<keyword id="KW-0106">Calcium</keyword>
<keyword id="KW-0109">Calcium transport</keyword>
<keyword id="KW-1003">Cell membrane</keyword>
<keyword id="KW-0406">Ion transport</keyword>
<keyword id="KW-0472">Membrane</keyword>
<keyword id="KW-1185">Reference proteome</keyword>
<keyword id="KW-0812">Transmembrane</keyword>
<keyword id="KW-1133">Transmembrane helix</keyword>
<keyword id="KW-0813">Transport</keyword>
<evidence type="ECO:0000255" key="1"/>
<evidence type="ECO:0000269" key="2">
    <source>
    </source>
</evidence>
<evidence type="ECO:0000269" key="3">
    <source>
    </source>
</evidence>
<evidence type="ECO:0000305" key="4"/>
<evidence type="ECO:0007829" key="5">
    <source>
        <dbReference type="PDB" id="4KJR"/>
    </source>
</evidence>
<evidence type="ECO:0007829" key="6">
    <source>
        <dbReference type="PDB" id="4KJS"/>
    </source>
</evidence>
<organism>
    <name type="scientific">Bacillus subtilis (strain 168)</name>
    <dbReference type="NCBI Taxonomy" id="224308"/>
    <lineage>
        <taxon>Bacteria</taxon>
        <taxon>Bacillati</taxon>
        <taxon>Bacillota</taxon>
        <taxon>Bacilli</taxon>
        <taxon>Bacillales</taxon>
        <taxon>Bacillaceae</taxon>
        <taxon>Bacillus</taxon>
    </lineage>
</organism>
<dbReference type="EMBL" id="D83967">
    <property type="protein sequence ID" value="BAA23395.1"/>
    <property type="molecule type" value="Genomic_DNA"/>
</dbReference>
<dbReference type="EMBL" id="AL009126">
    <property type="protein sequence ID" value="CAB12621.1"/>
    <property type="molecule type" value="Genomic_DNA"/>
</dbReference>
<dbReference type="PIR" id="A69808">
    <property type="entry name" value="A69808"/>
</dbReference>
<dbReference type="RefSeq" id="NP_388673.1">
    <property type="nucleotide sequence ID" value="NC_000964.3"/>
</dbReference>
<dbReference type="PDB" id="4KJR">
    <property type="method" value="X-ray"/>
    <property type="resolution" value="3.00 A"/>
    <property type="chains" value="A/B=1-351"/>
</dbReference>
<dbReference type="PDB" id="4KJS">
    <property type="method" value="X-ray"/>
    <property type="resolution" value="3.05 A"/>
    <property type="chains" value="A/B=1-351"/>
</dbReference>
<dbReference type="PDBsum" id="4KJR"/>
<dbReference type="PDBsum" id="4KJS"/>
<dbReference type="SMR" id="O34840"/>
<dbReference type="FunCoup" id="O34840">
    <property type="interactions" value="241"/>
</dbReference>
<dbReference type="STRING" id="224308.BSU07920"/>
<dbReference type="TCDB" id="2.A.19.2.7">
    <property type="family name" value="the ca(2+):cation antiporter (caca) family"/>
</dbReference>
<dbReference type="PaxDb" id="224308-BSU07920"/>
<dbReference type="EnsemblBacteria" id="CAB12621">
    <property type="protein sequence ID" value="CAB12621"/>
    <property type="gene ID" value="BSU_07920"/>
</dbReference>
<dbReference type="GeneID" id="939693"/>
<dbReference type="KEGG" id="bsu:BSU07920"/>
<dbReference type="PATRIC" id="fig|224308.179.peg.858"/>
<dbReference type="eggNOG" id="COG0387">
    <property type="taxonomic scope" value="Bacteria"/>
</dbReference>
<dbReference type="InParanoid" id="O34840"/>
<dbReference type="OrthoDB" id="9776105at2"/>
<dbReference type="PhylomeDB" id="O34840"/>
<dbReference type="BioCyc" id="BSUB:BSU07920-MONOMER"/>
<dbReference type="SABIO-RK" id="O34840"/>
<dbReference type="EvolutionaryTrace" id="O34840"/>
<dbReference type="Proteomes" id="UP000001570">
    <property type="component" value="Chromosome"/>
</dbReference>
<dbReference type="GO" id="GO:0005886">
    <property type="term" value="C:plasma membrane"/>
    <property type="evidence" value="ECO:0000314"/>
    <property type="project" value="UniProtKB"/>
</dbReference>
<dbReference type="GO" id="GO:0015369">
    <property type="term" value="F:calcium:proton antiporter activity"/>
    <property type="evidence" value="ECO:0000314"/>
    <property type="project" value="UniProtKB"/>
</dbReference>
<dbReference type="GO" id="GO:0070588">
    <property type="term" value="P:calcium ion transmembrane transport"/>
    <property type="evidence" value="ECO:0000314"/>
    <property type="project" value="UniProtKB"/>
</dbReference>
<dbReference type="GO" id="GO:0006874">
    <property type="term" value="P:intracellular calcium ion homeostasis"/>
    <property type="evidence" value="ECO:0000318"/>
    <property type="project" value="GO_Central"/>
</dbReference>
<dbReference type="Gene3D" id="1.20.1420.30">
    <property type="entry name" value="NCX, central ion-binding region"/>
    <property type="match status" value="1"/>
</dbReference>
<dbReference type="InterPro" id="IPR004713">
    <property type="entry name" value="CaH_exchang"/>
</dbReference>
<dbReference type="InterPro" id="IPR004798">
    <property type="entry name" value="CAX-like"/>
</dbReference>
<dbReference type="InterPro" id="IPR004837">
    <property type="entry name" value="NaCa_Exmemb"/>
</dbReference>
<dbReference type="InterPro" id="IPR044880">
    <property type="entry name" value="NCX_ion-bd_dom_sf"/>
</dbReference>
<dbReference type="NCBIfam" id="TIGR00846">
    <property type="entry name" value="caca2"/>
    <property type="match status" value="1"/>
</dbReference>
<dbReference type="NCBIfam" id="TIGR00378">
    <property type="entry name" value="cax"/>
    <property type="match status" value="1"/>
</dbReference>
<dbReference type="PANTHER" id="PTHR31503">
    <property type="entry name" value="VACUOLAR CALCIUM ION TRANSPORTER"/>
    <property type="match status" value="1"/>
</dbReference>
<dbReference type="PANTHER" id="PTHR31503:SF22">
    <property type="entry name" value="VACUOLAR CALCIUM ION TRANSPORTER"/>
    <property type="match status" value="1"/>
</dbReference>
<dbReference type="Pfam" id="PF01699">
    <property type="entry name" value="Na_Ca_ex"/>
    <property type="match status" value="2"/>
</dbReference>
<protein>
    <recommendedName>
        <fullName>Ca(2+)/H(+) antiporter ChaA</fullName>
    </recommendedName>
</protein>
<name>CHAA_BACSU</name>
<proteinExistence type="evidence at protein level"/>
<accession>O34840</accession>
<accession>Q79EY2</accession>
<gene>
    <name type="primary">chaA</name>
    <name type="synonym">yfkE</name>
    <name type="ordered locus">BSU07920</name>
</gene>
<feature type="chain" id="PRO_0000376844" description="Ca(2+)/H(+) antiporter ChaA">
    <location>
        <begin position="1"/>
        <end position="351"/>
    </location>
</feature>
<feature type="transmembrane region" description="Helical" evidence="1">
    <location>
        <begin position="4"/>
        <end position="24"/>
    </location>
</feature>
<feature type="transmembrane region" description="Helical" evidence="1">
    <location>
        <begin position="25"/>
        <end position="45"/>
    </location>
</feature>
<feature type="transmembrane region" description="Helical" evidence="1">
    <location>
        <begin position="59"/>
        <end position="79"/>
    </location>
</feature>
<feature type="transmembrane region" description="Helical" evidence="1">
    <location>
        <begin position="86"/>
        <end position="106"/>
    </location>
</feature>
<feature type="transmembrane region" description="Helical" evidence="1">
    <location>
        <begin position="130"/>
        <end position="150"/>
    </location>
</feature>
<feature type="transmembrane region" description="Helical" evidence="1">
    <location>
        <begin position="156"/>
        <end position="176"/>
    </location>
</feature>
<feature type="transmembrane region" description="Helical" evidence="1">
    <location>
        <begin position="205"/>
        <end position="225"/>
    </location>
</feature>
<feature type="transmembrane region" description="Helical" evidence="1">
    <location>
        <begin position="241"/>
        <end position="261"/>
    </location>
</feature>
<feature type="transmembrane region" description="Helical" evidence="1">
    <location>
        <begin position="282"/>
        <end position="302"/>
    </location>
</feature>
<feature type="transmembrane region" description="Helical" evidence="1">
    <location>
        <begin position="303"/>
        <end position="323"/>
    </location>
</feature>
<feature type="transmembrane region" description="Helical" evidence="1">
    <location>
        <begin position="331"/>
        <end position="351"/>
    </location>
</feature>
<feature type="mutagenesis site" description="Almost no change in activity." evidence="3">
    <original>N</original>
    <variation>A</variation>
    <location>
        <position position="64"/>
    </location>
</feature>
<feature type="mutagenesis site" description="Decrease in activity." evidence="3">
    <original>G</original>
    <variation>A</variation>
    <location>
        <position position="68"/>
    </location>
</feature>
<feature type="mutagenesis site" description="Almost loss of activity." evidence="3">
    <original>N</original>
    <variation>A</variation>
    <location>
        <position position="69"/>
    </location>
</feature>
<feature type="mutagenesis site" description="Lack of activity." evidence="3">
    <original>E</original>
    <variation>A</variation>
    <location>
        <position position="72"/>
    </location>
</feature>
<feature type="mutagenesis site" description="Decrease in activity." evidence="3">
    <original>N</original>
    <variation>A</variation>
    <location>
        <position position="99"/>
    </location>
</feature>
<feature type="mutagenesis site" description="Almost no change in activity." evidence="3">
    <original>K</original>
    <variation>A</variation>
    <location>
        <position position="116"/>
    </location>
</feature>
<feature type="mutagenesis site" description="Decrease in activity." evidence="3">
    <original>N</original>
    <variation>A</variation>
    <location>
        <position position="252"/>
    </location>
</feature>
<feature type="mutagenesis site" description="Lack of activity." evidence="3">
    <original>E</original>
    <variation>A</variation>
    <location>
        <position position="255"/>
    </location>
</feature>
<feature type="mutagenesis site" description="Almost loss of activity." evidence="3">
    <original>H</original>
    <variation>A</variation>
    <location>
        <position position="256"/>
    </location>
</feature>
<feature type="mutagenesis site" description="Decrease in activity." evidence="3">
    <original>S</original>
    <variation>A</variation>
    <location>
        <position position="258"/>
    </location>
</feature>
<feature type="mutagenesis site" description="Almost no change in activity." evidence="3">
    <original>S</original>
    <variation>A</variation>
    <location>
        <position position="278"/>
    </location>
</feature>
<feature type="mutagenesis site" description="Almost loss of activity." evidence="3">
    <original>Q</original>
    <variation>A</variation>
    <location>
        <position position="281"/>
    </location>
</feature>
<feature type="helix" evidence="5">
    <location>
        <begin position="3"/>
        <end position="22"/>
    </location>
</feature>
<feature type="helix" evidence="5">
    <location>
        <begin position="26"/>
        <end position="53"/>
    </location>
</feature>
<feature type="helix" evidence="5">
    <location>
        <begin position="60"/>
        <end position="66"/>
    </location>
</feature>
<feature type="helix" evidence="5">
    <location>
        <begin position="67"/>
        <end position="69"/>
    </location>
</feature>
<feature type="helix" evidence="5">
    <location>
        <begin position="70"/>
        <end position="81"/>
    </location>
</feature>
<feature type="helix" evidence="5">
    <location>
        <begin position="85"/>
        <end position="99"/>
    </location>
</feature>
<feature type="helix" evidence="5">
    <location>
        <begin position="102"/>
        <end position="110"/>
    </location>
</feature>
<feature type="turn" evidence="6">
    <location>
        <begin position="111"/>
        <end position="113"/>
    </location>
</feature>
<feature type="helix" evidence="5">
    <location>
        <begin position="121"/>
        <end position="139"/>
    </location>
</feature>
<feature type="helix" evidence="5">
    <location>
        <begin position="141"/>
        <end position="146"/>
    </location>
</feature>
<feature type="turn" evidence="5">
    <location>
        <begin position="147"/>
        <end position="149"/>
    </location>
</feature>
<feature type="helix" evidence="5">
    <location>
        <begin position="152"/>
        <end position="176"/>
    </location>
</feature>
<feature type="helix" evidence="5">
    <location>
        <begin position="204"/>
        <end position="212"/>
    </location>
</feature>
<feature type="turn" evidence="5">
    <location>
        <begin position="213"/>
        <end position="215"/>
    </location>
</feature>
<feature type="helix" evidence="5">
    <location>
        <begin position="216"/>
        <end position="234"/>
    </location>
</feature>
<feature type="helix" evidence="5">
    <location>
        <begin position="239"/>
        <end position="244"/>
    </location>
</feature>
<feature type="helix" evidence="5">
    <location>
        <begin position="246"/>
        <end position="256"/>
    </location>
</feature>
<feature type="helix" evidence="5">
    <location>
        <begin position="258"/>
        <end position="261"/>
    </location>
</feature>
<feature type="strand" evidence="5">
    <location>
        <begin position="263"/>
        <end position="266"/>
    </location>
</feature>
<feature type="helix" evidence="5">
    <location>
        <begin position="269"/>
        <end position="284"/>
    </location>
</feature>
<feature type="helix" evidence="5">
    <location>
        <begin position="286"/>
        <end position="296"/>
    </location>
</feature>
<feature type="strand" evidence="6">
    <location>
        <begin position="297"/>
        <end position="299"/>
    </location>
</feature>
<feature type="helix" evidence="5">
    <location>
        <begin position="307"/>
        <end position="324"/>
    </location>
</feature>
<feature type="helix" evidence="5">
    <location>
        <begin position="333"/>
        <end position="350"/>
    </location>
</feature>